<sequence length="104" mass="11414">MTNRLALSGTVCRAPLRKVSPSGIPHCQFVLEHRSVQEEAGFHRQAWCQMPVIVSGHENQAITHSITVGSRITVQGFISCHKAKNGLSKMVLHAEQIELIDSGD</sequence>
<reference key="1">
    <citation type="journal article" date="2009" name="PLoS ONE">
        <title>Salmonella paratyphi C: genetic divergence from Salmonella choleraesuis and pathogenic convergence with Salmonella typhi.</title>
        <authorList>
            <person name="Liu W.-Q."/>
            <person name="Feng Y."/>
            <person name="Wang Y."/>
            <person name="Zou Q.-H."/>
            <person name="Chen F."/>
            <person name="Guo J.-T."/>
            <person name="Peng Y.-H."/>
            <person name="Jin Y."/>
            <person name="Li Y.-G."/>
            <person name="Hu S.-N."/>
            <person name="Johnston R.N."/>
            <person name="Liu G.-R."/>
            <person name="Liu S.-L."/>
        </authorList>
    </citation>
    <scope>NUCLEOTIDE SEQUENCE [LARGE SCALE GENOMIC DNA]</scope>
    <source>
        <strain>RKS4594</strain>
    </source>
</reference>
<accession>C0Q6F9</accession>
<gene>
    <name evidence="1" type="primary">priB</name>
    <name type="ordered locus">SPC_4539</name>
</gene>
<feature type="chain" id="PRO_1000192548" description="Replication restart protein PriB">
    <location>
        <begin position="1"/>
        <end position="104"/>
    </location>
</feature>
<feature type="domain" description="SSB" evidence="1">
    <location>
        <begin position="1"/>
        <end position="101"/>
    </location>
</feature>
<comment type="function">
    <text evidence="1">Involved in the restart of stalled replication forks, which reloads the replicative helicase on sites other than the origin of replication; the PriA-PriB pathway is the major replication restart pathway. During primosome assembly it facilitates complex formation between PriA and DnaT on DNA; stabilizes PriA on DNA. Stimulates the DNA unwinding activity of PriA helicase.</text>
</comment>
<comment type="subunit">
    <text evidence="1">Homodimer. Interacts with PriA and DnaT. Component of the replication restart primosome. Primosome assembly occurs via a 'hand-off' mechanism. PriA binds to replication forks, subsequently PriB then DnaT bind; DnaT then displaces ssDNA to generate the helicase loading substrate.</text>
</comment>
<comment type="similarity">
    <text evidence="1">Belongs to the PriB family.</text>
</comment>
<dbReference type="EMBL" id="CP000857">
    <property type="protein sequence ID" value="ACN48589.1"/>
    <property type="molecule type" value="Genomic_DNA"/>
</dbReference>
<dbReference type="RefSeq" id="WP_001519453.1">
    <property type="nucleotide sequence ID" value="NC_012125.1"/>
</dbReference>
<dbReference type="SMR" id="C0Q6F9"/>
<dbReference type="GeneID" id="66758616"/>
<dbReference type="KEGG" id="sei:SPC_4539"/>
<dbReference type="HOGENOM" id="CLU_166075_0_0_6"/>
<dbReference type="Proteomes" id="UP000001599">
    <property type="component" value="Chromosome"/>
</dbReference>
<dbReference type="GO" id="GO:1990077">
    <property type="term" value="C:primosome complex"/>
    <property type="evidence" value="ECO:0007669"/>
    <property type="project" value="UniProtKB-KW"/>
</dbReference>
<dbReference type="GO" id="GO:0003697">
    <property type="term" value="F:single-stranded DNA binding"/>
    <property type="evidence" value="ECO:0007669"/>
    <property type="project" value="UniProtKB-UniRule"/>
</dbReference>
<dbReference type="GO" id="GO:0006269">
    <property type="term" value="P:DNA replication, synthesis of primer"/>
    <property type="evidence" value="ECO:0007669"/>
    <property type="project" value="UniProtKB-KW"/>
</dbReference>
<dbReference type="CDD" id="cd04496">
    <property type="entry name" value="SSB_OBF"/>
    <property type="match status" value="1"/>
</dbReference>
<dbReference type="FunFam" id="2.40.50.140:FF:000077">
    <property type="entry name" value="Primosomal replication protein N"/>
    <property type="match status" value="1"/>
</dbReference>
<dbReference type="Gene3D" id="2.40.50.140">
    <property type="entry name" value="Nucleic acid-binding proteins"/>
    <property type="match status" value="1"/>
</dbReference>
<dbReference type="HAMAP" id="MF_00720">
    <property type="entry name" value="PriB"/>
    <property type="match status" value="1"/>
</dbReference>
<dbReference type="InterPro" id="IPR012340">
    <property type="entry name" value="NA-bd_OB-fold"/>
</dbReference>
<dbReference type="InterPro" id="IPR000424">
    <property type="entry name" value="Primosome_PriB/ssb"/>
</dbReference>
<dbReference type="InterPro" id="IPR023646">
    <property type="entry name" value="Prisomal_replication_PriB"/>
</dbReference>
<dbReference type="NCBIfam" id="TIGR04418">
    <property type="entry name" value="PriB_gamma"/>
    <property type="match status" value="1"/>
</dbReference>
<dbReference type="Pfam" id="PF22657">
    <property type="entry name" value="SSB_1"/>
    <property type="match status" value="1"/>
</dbReference>
<dbReference type="PIRSF" id="PIRSF003135">
    <property type="entry name" value="Primosomal_n"/>
    <property type="match status" value="1"/>
</dbReference>
<dbReference type="SUPFAM" id="SSF50249">
    <property type="entry name" value="Nucleic acid-binding proteins"/>
    <property type="match status" value="1"/>
</dbReference>
<dbReference type="PROSITE" id="PS50935">
    <property type="entry name" value="SSB"/>
    <property type="match status" value="1"/>
</dbReference>
<proteinExistence type="inferred from homology"/>
<keyword id="KW-0235">DNA replication</keyword>
<keyword id="KW-0238">DNA-binding</keyword>
<keyword id="KW-0639">Primosome</keyword>
<name>PRIB_SALPC</name>
<protein>
    <recommendedName>
        <fullName evidence="1">Replication restart protein PriB</fullName>
    </recommendedName>
</protein>
<organism>
    <name type="scientific">Salmonella paratyphi C (strain RKS4594)</name>
    <dbReference type="NCBI Taxonomy" id="476213"/>
    <lineage>
        <taxon>Bacteria</taxon>
        <taxon>Pseudomonadati</taxon>
        <taxon>Pseudomonadota</taxon>
        <taxon>Gammaproteobacteria</taxon>
        <taxon>Enterobacterales</taxon>
        <taxon>Enterobacteriaceae</taxon>
        <taxon>Salmonella</taxon>
    </lineage>
</organism>
<evidence type="ECO:0000255" key="1">
    <source>
        <dbReference type="HAMAP-Rule" id="MF_00720"/>
    </source>
</evidence>